<accession>A6U1J5</accession>
<keyword id="KW-0028">Amino-acid biosynthesis</keyword>
<keyword id="KW-0057">Aromatic amino acid biosynthesis</keyword>
<keyword id="KW-0456">Lyase</keyword>
<keyword id="KW-0822">Tryptophan biosynthesis</keyword>
<feature type="chain" id="PRO_1000076370" description="Tryptophan synthase alpha chain">
    <location>
        <begin position="1"/>
        <end position="242"/>
    </location>
</feature>
<feature type="active site" description="Proton acceptor" evidence="1">
    <location>
        <position position="31"/>
    </location>
</feature>
<feature type="active site" description="Proton acceptor" evidence="1">
    <location>
        <position position="42"/>
    </location>
</feature>
<reference key="1">
    <citation type="submission" date="2007-06" db="EMBL/GenBank/DDBJ databases">
        <title>Complete sequence of chromosome of Staphylococcus aureus subsp. aureus JH1.</title>
        <authorList>
            <consortium name="US DOE Joint Genome Institute"/>
            <person name="Copeland A."/>
            <person name="Lucas S."/>
            <person name="Lapidus A."/>
            <person name="Barry K."/>
            <person name="Detter J.C."/>
            <person name="Glavina del Rio T."/>
            <person name="Hammon N."/>
            <person name="Israni S."/>
            <person name="Dalin E."/>
            <person name="Tice H."/>
            <person name="Pitluck S."/>
            <person name="Chain P."/>
            <person name="Malfatti S."/>
            <person name="Shin M."/>
            <person name="Vergez L."/>
            <person name="Schmutz J."/>
            <person name="Larimer F."/>
            <person name="Land M."/>
            <person name="Hauser L."/>
            <person name="Kyrpides N."/>
            <person name="Ivanova N."/>
            <person name="Tomasz A."/>
            <person name="Richardson P."/>
        </authorList>
    </citation>
    <scope>NUCLEOTIDE SEQUENCE [LARGE SCALE GENOMIC DNA]</scope>
    <source>
        <strain>JH1</strain>
    </source>
</reference>
<gene>
    <name evidence="1" type="primary">trpA</name>
    <name type="ordered locus">SaurJH1_1463</name>
</gene>
<name>TRPA_STAA2</name>
<protein>
    <recommendedName>
        <fullName evidence="1">Tryptophan synthase alpha chain</fullName>
        <ecNumber evidence="1">4.2.1.20</ecNumber>
    </recommendedName>
</protein>
<organism>
    <name type="scientific">Staphylococcus aureus (strain JH1)</name>
    <dbReference type="NCBI Taxonomy" id="359787"/>
    <lineage>
        <taxon>Bacteria</taxon>
        <taxon>Bacillati</taxon>
        <taxon>Bacillota</taxon>
        <taxon>Bacilli</taxon>
        <taxon>Bacillales</taxon>
        <taxon>Staphylococcaceae</taxon>
        <taxon>Staphylococcus</taxon>
    </lineage>
</organism>
<dbReference type="EC" id="4.2.1.20" evidence="1"/>
<dbReference type="EMBL" id="CP000736">
    <property type="protein sequence ID" value="ABR52313.1"/>
    <property type="molecule type" value="Genomic_DNA"/>
</dbReference>
<dbReference type="SMR" id="A6U1J5"/>
<dbReference type="KEGG" id="sah:SaurJH1_1463"/>
<dbReference type="HOGENOM" id="CLU_016734_0_0_9"/>
<dbReference type="UniPathway" id="UPA00035">
    <property type="reaction ID" value="UER00044"/>
</dbReference>
<dbReference type="GO" id="GO:0005829">
    <property type="term" value="C:cytosol"/>
    <property type="evidence" value="ECO:0007669"/>
    <property type="project" value="TreeGrafter"/>
</dbReference>
<dbReference type="GO" id="GO:0004834">
    <property type="term" value="F:tryptophan synthase activity"/>
    <property type="evidence" value="ECO:0007669"/>
    <property type="project" value="UniProtKB-UniRule"/>
</dbReference>
<dbReference type="CDD" id="cd04724">
    <property type="entry name" value="Tryptophan_synthase_alpha"/>
    <property type="match status" value="1"/>
</dbReference>
<dbReference type="Gene3D" id="3.20.20.70">
    <property type="entry name" value="Aldolase class I"/>
    <property type="match status" value="1"/>
</dbReference>
<dbReference type="HAMAP" id="MF_00131">
    <property type="entry name" value="Trp_synth_alpha"/>
    <property type="match status" value="1"/>
</dbReference>
<dbReference type="InterPro" id="IPR013785">
    <property type="entry name" value="Aldolase_TIM"/>
</dbReference>
<dbReference type="InterPro" id="IPR011060">
    <property type="entry name" value="RibuloseP-bd_barrel"/>
</dbReference>
<dbReference type="InterPro" id="IPR018204">
    <property type="entry name" value="Trp_synthase_alpha_AS"/>
</dbReference>
<dbReference type="InterPro" id="IPR002028">
    <property type="entry name" value="Trp_synthase_suA"/>
</dbReference>
<dbReference type="NCBIfam" id="TIGR00262">
    <property type="entry name" value="trpA"/>
    <property type="match status" value="1"/>
</dbReference>
<dbReference type="PANTHER" id="PTHR43406:SF1">
    <property type="entry name" value="TRYPTOPHAN SYNTHASE ALPHA CHAIN, CHLOROPLASTIC"/>
    <property type="match status" value="1"/>
</dbReference>
<dbReference type="PANTHER" id="PTHR43406">
    <property type="entry name" value="TRYPTOPHAN SYNTHASE, ALPHA CHAIN"/>
    <property type="match status" value="1"/>
</dbReference>
<dbReference type="Pfam" id="PF00290">
    <property type="entry name" value="Trp_syntA"/>
    <property type="match status" value="1"/>
</dbReference>
<dbReference type="SUPFAM" id="SSF51366">
    <property type="entry name" value="Ribulose-phoshate binding barrel"/>
    <property type="match status" value="1"/>
</dbReference>
<dbReference type="PROSITE" id="PS00167">
    <property type="entry name" value="TRP_SYNTHASE_ALPHA"/>
    <property type="match status" value="1"/>
</dbReference>
<evidence type="ECO:0000255" key="1">
    <source>
        <dbReference type="HAMAP-Rule" id="MF_00131"/>
    </source>
</evidence>
<sequence>MTKLFIPYIMGNKDLIENATLLSENGADIIEIGVPFSDPVADGPVIMEAGQQAIKQGITIDYIFNQLEKHGDQIKCNYVLMTYYNIICHYGEQAFFEKCRDTGVYGLIIPDLPYELSQRLKQQFSHYGVKIISLVAMTTDDKRIKDIVSHAEGFIYTVTMNATTGQNGAFHPELKRKIESIKAIANVPVVAGFGIRTPQHVADIKEVADGIVIGSEIVKRFKSNTREEIIRYLQSIQQTLNN</sequence>
<proteinExistence type="inferred from homology"/>
<comment type="function">
    <text evidence="1">The alpha subunit is responsible for the aldol cleavage of indoleglycerol phosphate to indole and glyceraldehyde 3-phosphate.</text>
</comment>
<comment type="catalytic activity">
    <reaction evidence="1">
        <text>(1S,2R)-1-C-(indol-3-yl)glycerol 3-phosphate + L-serine = D-glyceraldehyde 3-phosphate + L-tryptophan + H2O</text>
        <dbReference type="Rhea" id="RHEA:10532"/>
        <dbReference type="ChEBI" id="CHEBI:15377"/>
        <dbReference type="ChEBI" id="CHEBI:33384"/>
        <dbReference type="ChEBI" id="CHEBI:57912"/>
        <dbReference type="ChEBI" id="CHEBI:58866"/>
        <dbReference type="ChEBI" id="CHEBI:59776"/>
        <dbReference type="EC" id="4.2.1.20"/>
    </reaction>
</comment>
<comment type="pathway">
    <text evidence="1">Amino-acid biosynthesis; L-tryptophan biosynthesis; L-tryptophan from chorismate: step 5/5.</text>
</comment>
<comment type="subunit">
    <text evidence="1">Tetramer of two alpha and two beta chains.</text>
</comment>
<comment type="similarity">
    <text evidence="1">Belongs to the TrpA family.</text>
</comment>